<feature type="chain" id="PRO_0000330333" description="Ubiquitin-related modifier 1">
    <location>
        <begin position="1"/>
        <end position="96"/>
    </location>
</feature>
<feature type="modified residue" description="1-thioglycine" evidence="1">
    <location>
        <position position="96"/>
    </location>
</feature>
<feature type="cross-link" description="Glycyl lysine isopeptide (Gly-Lys) (interchain with K-? in acceptor proteins)" evidence="1">
    <location>
        <position position="96"/>
    </location>
</feature>
<name>URM1_ENCCU</name>
<comment type="function">
    <text evidence="1">Acts as a sulfur carrier required for 2-thiolation of mcm(5)S(2)U at tRNA wobble positions of cytosolic tRNA(Lys), tRNA(Glu) and tRNA(Gln). Serves as sulfur donor in tRNA 2-thiolation reaction by being thiocarboxylated (-COSH) at its C-terminus by the MOCS3 homolog UBA4. The sulfur is then transferred to tRNA to form 2-thiolation of mcm(5)S(2)U. Prior mcm(5) tRNA modification by the elongator complex is required for 2-thiolation. Also acts as a ubiquitin-like protein (UBL) that is covalently conjugated via an isopeptide bond to lysine residues of target proteins such as AHP1. The thiocarboxylated form serves as substrate for conjugation and oxidative stress specifically induces the formation of UBL-protein conjugates.</text>
</comment>
<comment type="pathway">
    <text evidence="1">tRNA modification; 5-methoxycarbonylmethyl-2-thiouridine-tRNA biosynthesis.</text>
</comment>
<comment type="subcellular location">
    <subcellularLocation>
        <location evidence="1">Cytoplasm</location>
    </subcellularLocation>
</comment>
<comment type="PTM">
    <text evidence="1">C-terminal thiocarboxylation occurs in 2 steps, it is first acyl-adenylated (-COAMP) via the hesA/moeB/thiF part of UBA4, then thiocarboxylated (-COSH) via the rhodanese domain of UBA4.</text>
</comment>
<comment type="similarity">
    <text evidence="1">Belongs to the URM1 family.</text>
</comment>
<accession>Q8SW42</accession>
<evidence type="ECO:0000255" key="1">
    <source>
        <dbReference type="HAMAP-Rule" id="MF_03048"/>
    </source>
</evidence>
<dbReference type="EMBL" id="AL590443">
    <property type="protein sequence ID" value="CAD26224.2"/>
    <property type="molecule type" value="Genomic_DNA"/>
</dbReference>
<dbReference type="RefSeq" id="NP_597589.1">
    <property type="nucleotide sequence ID" value="NM_001040953.1"/>
</dbReference>
<dbReference type="SMR" id="Q8SW42"/>
<dbReference type="FunCoup" id="Q8SW42">
    <property type="interactions" value="125"/>
</dbReference>
<dbReference type="STRING" id="284813.Q8SW42"/>
<dbReference type="GeneID" id="858751"/>
<dbReference type="KEGG" id="ecu:ECU03_0800"/>
<dbReference type="VEuPathDB" id="MicrosporidiaDB:ECU03_0800"/>
<dbReference type="HOGENOM" id="CLU_148208_1_0_1"/>
<dbReference type="InParanoid" id="Q8SW42"/>
<dbReference type="OrthoDB" id="10248987at2759"/>
<dbReference type="UniPathway" id="UPA00988"/>
<dbReference type="Proteomes" id="UP000000819">
    <property type="component" value="Chromosome III"/>
</dbReference>
<dbReference type="GO" id="GO:0005829">
    <property type="term" value="C:cytosol"/>
    <property type="evidence" value="ECO:0007669"/>
    <property type="project" value="UniProtKB-UniRule"/>
</dbReference>
<dbReference type="GO" id="GO:0032447">
    <property type="term" value="P:protein urmylation"/>
    <property type="evidence" value="ECO:0007669"/>
    <property type="project" value="UniProtKB-UniRule"/>
</dbReference>
<dbReference type="GO" id="GO:0034227">
    <property type="term" value="P:tRNA thio-modification"/>
    <property type="evidence" value="ECO:0007669"/>
    <property type="project" value="UniProtKB-UniRule"/>
</dbReference>
<dbReference type="GO" id="GO:0002098">
    <property type="term" value="P:tRNA wobble uridine modification"/>
    <property type="evidence" value="ECO:0007669"/>
    <property type="project" value="UniProtKB-UniRule"/>
</dbReference>
<dbReference type="Gene3D" id="3.10.20.30">
    <property type="match status" value="1"/>
</dbReference>
<dbReference type="HAMAP" id="MF_03048">
    <property type="entry name" value="Urm1"/>
    <property type="match status" value="1"/>
</dbReference>
<dbReference type="InterPro" id="IPR012675">
    <property type="entry name" value="Beta-grasp_dom_sf"/>
</dbReference>
<dbReference type="InterPro" id="IPR016155">
    <property type="entry name" value="Mopterin_synth/thiamin_S_b"/>
</dbReference>
<dbReference type="InterPro" id="IPR015221">
    <property type="entry name" value="Urm1"/>
</dbReference>
<dbReference type="Pfam" id="PF09138">
    <property type="entry name" value="Urm1"/>
    <property type="match status" value="1"/>
</dbReference>
<dbReference type="SUPFAM" id="SSF54285">
    <property type="entry name" value="MoaD/ThiS"/>
    <property type="match status" value="1"/>
</dbReference>
<keyword id="KW-0963">Cytoplasm</keyword>
<keyword id="KW-1017">Isopeptide bond</keyword>
<keyword id="KW-1185">Reference proteome</keyword>
<keyword id="KW-0819">tRNA processing</keyword>
<keyword id="KW-0833">Ubl conjugation pathway</keyword>
<protein>
    <recommendedName>
        <fullName evidence="1">Ubiquitin-related modifier 1</fullName>
    </recommendedName>
</protein>
<reference key="1">
    <citation type="journal article" date="2001" name="Nature">
        <title>Genome sequence and gene compaction of the eukaryote parasite Encephalitozoon cuniculi.</title>
        <authorList>
            <person name="Katinka M.D."/>
            <person name="Duprat S."/>
            <person name="Cornillot E."/>
            <person name="Metenier G."/>
            <person name="Thomarat F."/>
            <person name="Prensier G."/>
            <person name="Barbe V."/>
            <person name="Peyretaillade E."/>
            <person name="Brottier P."/>
            <person name="Wincker P."/>
            <person name="Delbac F."/>
            <person name="El Alaoui H."/>
            <person name="Peyret P."/>
            <person name="Saurin W."/>
            <person name="Gouy M."/>
            <person name="Weissenbach J."/>
            <person name="Vivares C.P."/>
        </authorList>
    </citation>
    <scope>NUCLEOTIDE SEQUENCE [LARGE SCALE GENOMIC DNA]</scope>
    <source>
        <strain>GB-M1</strain>
    </source>
</reference>
<reference key="2">
    <citation type="journal article" date="2009" name="BMC Genomics">
        <title>Identification of transcriptional signals in Encephalitozoon cuniculi widespread among Microsporidia phylum: support for accurate structural genome annotation.</title>
        <authorList>
            <person name="Peyretaillade E."/>
            <person name="Goncalves O."/>
            <person name="Terrat S."/>
            <person name="Dugat-Bony E."/>
            <person name="Wincker P."/>
            <person name="Cornman R.S."/>
            <person name="Evans J.D."/>
            <person name="Delbac F."/>
            <person name="Peyret P."/>
        </authorList>
    </citation>
    <scope>GENOME REANNOTATION</scope>
    <source>
        <strain>GB-M1</strain>
    </source>
</reference>
<gene>
    <name evidence="1" type="primary">URM1</name>
    <name type="ordered locus">ECU03_0800</name>
</gene>
<sequence length="96" mass="10927">MKFRFNGASNVELNNREIELTREEVEGSSIATVGDALRYLFGKYAETRDSFFDHHGELVHGTICIINKMDWEILEKERSPVKHGDHIVLISTIHGG</sequence>
<proteinExistence type="inferred from homology"/>
<organism>
    <name type="scientific">Encephalitozoon cuniculi (strain GB-M1)</name>
    <name type="common">Microsporidian parasite</name>
    <dbReference type="NCBI Taxonomy" id="284813"/>
    <lineage>
        <taxon>Eukaryota</taxon>
        <taxon>Fungi</taxon>
        <taxon>Fungi incertae sedis</taxon>
        <taxon>Microsporidia</taxon>
        <taxon>Unikaryonidae</taxon>
        <taxon>Encephalitozoon</taxon>
    </lineage>
</organism>